<organism>
    <name type="scientific">Synechococcus sp. (strain RCC307)</name>
    <dbReference type="NCBI Taxonomy" id="316278"/>
    <lineage>
        <taxon>Bacteria</taxon>
        <taxon>Bacillati</taxon>
        <taxon>Cyanobacteriota</taxon>
        <taxon>Cyanophyceae</taxon>
        <taxon>Synechococcales</taxon>
        <taxon>Synechococcaceae</taxon>
        <taxon>Synechococcus</taxon>
    </lineage>
</organism>
<gene>
    <name evidence="1" type="primary">rplU</name>
    <name evidence="1" type="synonym">rpl21</name>
    <name type="ordered locus">SynRCC307_1827</name>
</gene>
<name>RL21_SYNR3</name>
<dbReference type="EMBL" id="CT978603">
    <property type="protein sequence ID" value="CAK28730.1"/>
    <property type="molecule type" value="Genomic_DNA"/>
</dbReference>
<dbReference type="SMR" id="A5GV21"/>
<dbReference type="STRING" id="316278.SynRCC307_1827"/>
<dbReference type="KEGG" id="syr:SynRCC307_1827"/>
<dbReference type="eggNOG" id="COG0261">
    <property type="taxonomic scope" value="Bacteria"/>
</dbReference>
<dbReference type="HOGENOM" id="CLU_061463_6_0_3"/>
<dbReference type="OrthoDB" id="9813334at2"/>
<dbReference type="Proteomes" id="UP000001115">
    <property type="component" value="Chromosome"/>
</dbReference>
<dbReference type="GO" id="GO:0005737">
    <property type="term" value="C:cytoplasm"/>
    <property type="evidence" value="ECO:0007669"/>
    <property type="project" value="UniProtKB-ARBA"/>
</dbReference>
<dbReference type="GO" id="GO:1990904">
    <property type="term" value="C:ribonucleoprotein complex"/>
    <property type="evidence" value="ECO:0007669"/>
    <property type="project" value="UniProtKB-KW"/>
</dbReference>
<dbReference type="GO" id="GO:0005840">
    <property type="term" value="C:ribosome"/>
    <property type="evidence" value="ECO:0007669"/>
    <property type="project" value="UniProtKB-KW"/>
</dbReference>
<dbReference type="GO" id="GO:0019843">
    <property type="term" value="F:rRNA binding"/>
    <property type="evidence" value="ECO:0007669"/>
    <property type="project" value="UniProtKB-UniRule"/>
</dbReference>
<dbReference type="GO" id="GO:0003735">
    <property type="term" value="F:structural constituent of ribosome"/>
    <property type="evidence" value="ECO:0007669"/>
    <property type="project" value="InterPro"/>
</dbReference>
<dbReference type="GO" id="GO:0006412">
    <property type="term" value="P:translation"/>
    <property type="evidence" value="ECO:0007669"/>
    <property type="project" value="UniProtKB-UniRule"/>
</dbReference>
<dbReference type="HAMAP" id="MF_01363">
    <property type="entry name" value="Ribosomal_bL21"/>
    <property type="match status" value="1"/>
</dbReference>
<dbReference type="InterPro" id="IPR028909">
    <property type="entry name" value="bL21-like"/>
</dbReference>
<dbReference type="InterPro" id="IPR036164">
    <property type="entry name" value="bL21-like_sf"/>
</dbReference>
<dbReference type="InterPro" id="IPR001787">
    <property type="entry name" value="Ribosomal_bL21"/>
</dbReference>
<dbReference type="InterPro" id="IPR018258">
    <property type="entry name" value="Ribosomal_bL21_CS"/>
</dbReference>
<dbReference type="NCBIfam" id="TIGR00061">
    <property type="entry name" value="L21"/>
    <property type="match status" value="1"/>
</dbReference>
<dbReference type="PANTHER" id="PTHR21349">
    <property type="entry name" value="50S RIBOSOMAL PROTEIN L21"/>
    <property type="match status" value="1"/>
</dbReference>
<dbReference type="PANTHER" id="PTHR21349:SF0">
    <property type="entry name" value="LARGE RIBOSOMAL SUBUNIT PROTEIN BL21M"/>
    <property type="match status" value="1"/>
</dbReference>
<dbReference type="Pfam" id="PF00829">
    <property type="entry name" value="Ribosomal_L21p"/>
    <property type="match status" value="1"/>
</dbReference>
<dbReference type="SUPFAM" id="SSF141091">
    <property type="entry name" value="L21p-like"/>
    <property type="match status" value="1"/>
</dbReference>
<dbReference type="PROSITE" id="PS01169">
    <property type="entry name" value="RIBOSOMAL_L21"/>
    <property type="match status" value="1"/>
</dbReference>
<evidence type="ECO:0000255" key="1">
    <source>
        <dbReference type="HAMAP-Rule" id="MF_01363"/>
    </source>
</evidence>
<evidence type="ECO:0000256" key="2">
    <source>
        <dbReference type="SAM" id="MobiDB-lite"/>
    </source>
</evidence>
<evidence type="ECO:0000305" key="3"/>
<proteinExistence type="inferred from homology"/>
<keyword id="KW-1185">Reference proteome</keyword>
<keyword id="KW-0687">Ribonucleoprotein</keyword>
<keyword id="KW-0689">Ribosomal protein</keyword>
<keyword id="KW-0694">RNA-binding</keyword>
<keyword id="KW-0699">rRNA-binding</keyword>
<reference key="1">
    <citation type="submission" date="2006-05" db="EMBL/GenBank/DDBJ databases">
        <authorList>
            <consortium name="Genoscope"/>
        </authorList>
    </citation>
    <scope>NUCLEOTIDE SEQUENCE [LARGE SCALE GENOMIC DNA]</scope>
    <source>
        <strain>RCC307</strain>
    </source>
</reference>
<protein>
    <recommendedName>
        <fullName evidence="1">Large ribosomal subunit protein bL21</fullName>
    </recommendedName>
    <alternativeName>
        <fullName evidence="3">50S ribosomal protein L21</fullName>
    </alternativeName>
</protein>
<accession>A5GV21</accession>
<comment type="function">
    <text evidence="1">This protein binds to 23S rRNA in the presence of protein L20.</text>
</comment>
<comment type="subunit">
    <text evidence="1">Part of the 50S ribosomal subunit. Contacts protein L20.</text>
</comment>
<comment type="similarity">
    <text evidence="1">Belongs to the bacterial ribosomal protein bL21 family.</text>
</comment>
<feature type="chain" id="PRO_1000073392" description="Large ribosomal subunit protein bL21">
    <location>
        <begin position="1"/>
        <end position="136"/>
    </location>
</feature>
<feature type="region of interest" description="Disordered" evidence="2">
    <location>
        <begin position="1"/>
        <end position="25"/>
    </location>
</feature>
<feature type="compositionally biased region" description="Low complexity" evidence="2">
    <location>
        <begin position="1"/>
        <end position="21"/>
    </location>
</feature>
<sequence length="136" mass="14959">MSETPSKAKASKPAESKAQASDSSGANQYAIVEASGQQFWLQPNRYYDFDRLEGEVGDKVSLKEVLLVSGKAGASLGQPYVKDAVVNLKVLAHRRGPKVIVYKMQKKKKTRRKNGHRQELTRVMVESITVGGKPLS</sequence>